<organism>
    <name type="scientific">Bacillus cereus (strain ZK / E33L)</name>
    <dbReference type="NCBI Taxonomy" id="288681"/>
    <lineage>
        <taxon>Bacteria</taxon>
        <taxon>Bacillati</taxon>
        <taxon>Bacillota</taxon>
        <taxon>Bacilli</taxon>
        <taxon>Bacillales</taxon>
        <taxon>Bacillaceae</taxon>
        <taxon>Bacillus</taxon>
        <taxon>Bacillus cereus group</taxon>
    </lineage>
</organism>
<name>RL20_BACCZ</name>
<proteinExistence type="inferred from homology"/>
<protein>
    <recommendedName>
        <fullName evidence="1">Large ribosomal subunit protein bL20</fullName>
    </recommendedName>
    <alternativeName>
        <fullName evidence="2">50S ribosomal protein L20</fullName>
    </alternativeName>
</protein>
<reference key="1">
    <citation type="journal article" date="2006" name="J. Bacteriol.">
        <title>Pathogenomic sequence analysis of Bacillus cereus and Bacillus thuringiensis isolates closely related to Bacillus anthracis.</title>
        <authorList>
            <person name="Han C.S."/>
            <person name="Xie G."/>
            <person name="Challacombe J.F."/>
            <person name="Altherr M.R."/>
            <person name="Bhotika S.S."/>
            <person name="Bruce D."/>
            <person name="Campbell C.S."/>
            <person name="Campbell M.L."/>
            <person name="Chen J."/>
            <person name="Chertkov O."/>
            <person name="Cleland C."/>
            <person name="Dimitrijevic M."/>
            <person name="Doggett N.A."/>
            <person name="Fawcett J.J."/>
            <person name="Glavina T."/>
            <person name="Goodwin L.A."/>
            <person name="Hill K.K."/>
            <person name="Hitchcock P."/>
            <person name="Jackson P.J."/>
            <person name="Keim P."/>
            <person name="Kewalramani A.R."/>
            <person name="Longmire J."/>
            <person name="Lucas S."/>
            <person name="Malfatti S."/>
            <person name="McMurry K."/>
            <person name="Meincke L.J."/>
            <person name="Misra M."/>
            <person name="Moseman B.L."/>
            <person name="Mundt M."/>
            <person name="Munk A.C."/>
            <person name="Okinaka R.T."/>
            <person name="Parson-Quintana B."/>
            <person name="Reilly L.P."/>
            <person name="Richardson P."/>
            <person name="Robinson D.L."/>
            <person name="Rubin E."/>
            <person name="Saunders E."/>
            <person name="Tapia R."/>
            <person name="Tesmer J.G."/>
            <person name="Thayer N."/>
            <person name="Thompson L.S."/>
            <person name="Tice H."/>
            <person name="Ticknor L.O."/>
            <person name="Wills P.L."/>
            <person name="Brettin T.S."/>
            <person name="Gilna P."/>
        </authorList>
    </citation>
    <scope>NUCLEOTIDE SEQUENCE [LARGE SCALE GENOMIC DNA]</scope>
    <source>
        <strain>ZK / E33L</strain>
    </source>
</reference>
<comment type="function">
    <text evidence="1">Binds directly to 23S ribosomal RNA and is necessary for the in vitro assembly process of the 50S ribosomal subunit. It is not involved in the protein synthesizing functions of that subunit.</text>
</comment>
<comment type="similarity">
    <text evidence="1">Belongs to the bacterial ribosomal protein bL20 family.</text>
</comment>
<sequence>MPRVKGGTVTRQRRKKVIKLAKGYYGSKNTLFKVANQQVMKSLMYAFRDRRQKKRDFRKLWITRINAAARMNGLSYSRLMHGLKNAGIEVNRKMLADLAVHDEKAFAELATVAKNNIN</sequence>
<dbReference type="EMBL" id="CP000001">
    <property type="protein sequence ID" value="AAU15951.1"/>
    <property type="molecule type" value="Genomic_DNA"/>
</dbReference>
<dbReference type="RefSeq" id="WP_001138362.1">
    <property type="nucleotide sequence ID" value="NZ_CP009968.1"/>
</dbReference>
<dbReference type="SMR" id="Q633M3"/>
<dbReference type="GeneID" id="93006537"/>
<dbReference type="KEGG" id="bcz:BCE33L4315"/>
<dbReference type="PATRIC" id="fig|288681.22.peg.1059"/>
<dbReference type="Proteomes" id="UP000002612">
    <property type="component" value="Chromosome"/>
</dbReference>
<dbReference type="GO" id="GO:1990904">
    <property type="term" value="C:ribonucleoprotein complex"/>
    <property type="evidence" value="ECO:0007669"/>
    <property type="project" value="UniProtKB-KW"/>
</dbReference>
<dbReference type="GO" id="GO:0005840">
    <property type="term" value="C:ribosome"/>
    <property type="evidence" value="ECO:0007669"/>
    <property type="project" value="UniProtKB-KW"/>
</dbReference>
<dbReference type="GO" id="GO:0019843">
    <property type="term" value="F:rRNA binding"/>
    <property type="evidence" value="ECO:0007669"/>
    <property type="project" value="UniProtKB-UniRule"/>
</dbReference>
<dbReference type="GO" id="GO:0003735">
    <property type="term" value="F:structural constituent of ribosome"/>
    <property type="evidence" value="ECO:0007669"/>
    <property type="project" value="InterPro"/>
</dbReference>
<dbReference type="GO" id="GO:0000027">
    <property type="term" value="P:ribosomal large subunit assembly"/>
    <property type="evidence" value="ECO:0007669"/>
    <property type="project" value="UniProtKB-UniRule"/>
</dbReference>
<dbReference type="GO" id="GO:0006412">
    <property type="term" value="P:translation"/>
    <property type="evidence" value="ECO:0007669"/>
    <property type="project" value="InterPro"/>
</dbReference>
<dbReference type="CDD" id="cd07026">
    <property type="entry name" value="Ribosomal_L20"/>
    <property type="match status" value="1"/>
</dbReference>
<dbReference type="FunFam" id="1.10.1900.20:FF:000001">
    <property type="entry name" value="50S ribosomal protein L20"/>
    <property type="match status" value="1"/>
</dbReference>
<dbReference type="Gene3D" id="6.10.160.10">
    <property type="match status" value="1"/>
</dbReference>
<dbReference type="Gene3D" id="1.10.1900.20">
    <property type="entry name" value="Ribosomal protein L20"/>
    <property type="match status" value="1"/>
</dbReference>
<dbReference type="HAMAP" id="MF_00382">
    <property type="entry name" value="Ribosomal_bL20"/>
    <property type="match status" value="1"/>
</dbReference>
<dbReference type="InterPro" id="IPR005813">
    <property type="entry name" value="Ribosomal_bL20"/>
</dbReference>
<dbReference type="InterPro" id="IPR049946">
    <property type="entry name" value="RIBOSOMAL_L20_CS"/>
</dbReference>
<dbReference type="InterPro" id="IPR035566">
    <property type="entry name" value="Ribosomal_protein_bL20_C"/>
</dbReference>
<dbReference type="NCBIfam" id="TIGR01032">
    <property type="entry name" value="rplT_bact"/>
    <property type="match status" value="1"/>
</dbReference>
<dbReference type="PANTHER" id="PTHR10986">
    <property type="entry name" value="39S RIBOSOMAL PROTEIN L20"/>
    <property type="match status" value="1"/>
</dbReference>
<dbReference type="Pfam" id="PF00453">
    <property type="entry name" value="Ribosomal_L20"/>
    <property type="match status" value="1"/>
</dbReference>
<dbReference type="PRINTS" id="PR00062">
    <property type="entry name" value="RIBOSOMALL20"/>
</dbReference>
<dbReference type="SUPFAM" id="SSF74731">
    <property type="entry name" value="Ribosomal protein L20"/>
    <property type="match status" value="1"/>
</dbReference>
<dbReference type="PROSITE" id="PS00937">
    <property type="entry name" value="RIBOSOMAL_L20"/>
    <property type="match status" value="1"/>
</dbReference>
<gene>
    <name evidence="1" type="primary">rplT</name>
    <name type="ordered locus">BCE33L4315</name>
</gene>
<keyword id="KW-0687">Ribonucleoprotein</keyword>
<keyword id="KW-0689">Ribosomal protein</keyword>
<keyword id="KW-0694">RNA-binding</keyword>
<keyword id="KW-0699">rRNA-binding</keyword>
<evidence type="ECO:0000255" key="1">
    <source>
        <dbReference type="HAMAP-Rule" id="MF_00382"/>
    </source>
</evidence>
<evidence type="ECO:0000305" key="2"/>
<accession>Q633M3</accession>
<feature type="chain" id="PRO_0000177114" description="Large ribosomal subunit protein bL20">
    <location>
        <begin position="1"/>
        <end position="118"/>
    </location>
</feature>